<feature type="signal peptide" evidence="1">
    <location>
        <begin position="1"/>
        <end position="19"/>
    </location>
</feature>
<feature type="chain" id="PRO_5000140289" description="Endo-1,4-beta-xylanase 11A">
    <location>
        <begin position="20"/>
        <end position="227"/>
    </location>
</feature>
<feature type="domain" description="GH11" evidence="2">
    <location>
        <begin position="37"/>
        <end position="227"/>
    </location>
</feature>
<feature type="active site" description="Nucleophile" evidence="3">
    <location>
        <position position="122"/>
    </location>
</feature>
<feature type="active site" description="Proton donor" evidence="4">
    <location>
        <position position="214"/>
    </location>
</feature>
<protein>
    <recommendedName>
        <fullName>Endo-1,4-beta-xylanase 11A</fullName>
        <shortName>Xylanase 11A</shortName>
        <ecNumber>3.2.1.8</ecNumber>
    </recommendedName>
    <alternativeName>
        <fullName>1,4-beta-D-xylan xylanohydrolase 11A</fullName>
    </alternativeName>
</protein>
<evidence type="ECO:0000255" key="1"/>
<evidence type="ECO:0000255" key="2">
    <source>
        <dbReference type="PROSITE-ProRule" id="PRU01097"/>
    </source>
</evidence>
<evidence type="ECO:0000255" key="3">
    <source>
        <dbReference type="PROSITE-ProRule" id="PRU10062"/>
    </source>
</evidence>
<evidence type="ECO:0000255" key="4">
    <source>
        <dbReference type="PROSITE-ProRule" id="PRU10063"/>
    </source>
</evidence>
<evidence type="ECO:0000269" key="5">
    <source>
    </source>
</evidence>
<evidence type="ECO:0000305" key="6"/>
<reference key="1">
    <citation type="journal article" date="2006" name="Mol. Plant Microbe Interact.">
        <title>The endo-beta-1,4-xylanase xyn11A is required for virulence in Botrytis cinerea.</title>
        <authorList>
            <person name="Brito N."/>
            <person name="Espino J.J."/>
            <person name="Gonzalez C."/>
        </authorList>
    </citation>
    <scope>NUCLEOTIDE SEQUENCE [GENOMIC DNA]</scope>
    <scope>INDUCTION</scope>
    <scope>FUNCTION</scope>
    <scope>DISRUPTION PHENOTYPE</scope>
    <source>
        <strain>SAS56</strain>
    </source>
</reference>
<gene>
    <name type="primary">xyn11A</name>
</gene>
<sequence length="227" mass="23824">MVSASSLLLAASAIAGVFSAPAAAPVSENLNVLQERALTSSATGTSGGYYYSFWTDGSGGVTYSNGANGQYAVSWTGNKGNFVGGKGWAVGSERSISYTGSYKPNGNSYLSVYGWTTSPLIEYYIVEDFGTYDPSSAATEIGSVTSDGSTYKILETTRTNQPSVQGTATFKQYWSVRTSKRTSGTVTTANHFAAWKKLGLTLGSTYNYQIVAVEGYQSSGSASITVS</sequence>
<organism>
    <name type="scientific">Botryotinia fuckeliana</name>
    <name type="common">Noble rot fungus</name>
    <name type="synonym">Botrytis cinerea</name>
    <dbReference type="NCBI Taxonomy" id="40559"/>
    <lineage>
        <taxon>Eukaryota</taxon>
        <taxon>Fungi</taxon>
        <taxon>Dikarya</taxon>
        <taxon>Ascomycota</taxon>
        <taxon>Pezizomycotina</taxon>
        <taxon>Leotiomycetes</taxon>
        <taxon>Helotiales</taxon>
        <taxon>Sclerotiniaceae</taxon>
        <taxon>Botrytis</taxon>
    </lineage>
</organism>
<comment type="function">
    <text evidence="5">Endo-1,4-beta-xylanase involved in the hydrolysis of xylan, a major structural heterogeneous polysaccharide found in plant biomass representing the second most abundant polysaccharide in the biosphere, after cellulose. Required for planr infection and the appearance of secondary lesions.</text>
</comment>
<comment type="catalytic activity">
    <reaction>
        <text>Endohydrolysis of (1-&gt;4)-beta-D-xylosidic linkages in xylans.</text>
        <dbReference type="EC" id="3.2.1.8"/>
    </reaction>
</comment>
<comment type="pathway">
    <text>Glycan degradation; xylan degradation.</text>
</comment>
<comment type="subcellular location">
    <subcellularLocation>
        <location>Secreted</location>
    </subcellularLocation>
</comment>
<comment type="induction">
    <text evidence="5">Expression is maximal when xylan is the only carbon source, and repressed by glucose. Expression is detected from the beginning of tomato leaves infection in the just-inoculated leaves, and the level sof transcript increased between 24 and 48 hours postinfection simultaneously with the appearance of visible lesions on the leaves.</text>
</comment>
<comment type="disruption phenotype">
    <text evidence="5">Leads to reduced ability to infect tomato leaves or grape berries.</text>
</comment>
<comment type="similarity">
    <text evidence="6">Belongs to the glycosyl hydrolase 11 (cellulase G) family.</text>
</comment>
<keyword id="KW-0119">Carbohydrate metabolism</keyword>
<keyword id="KW-0326">Glycosidase</keyword>
<keyword id="KW-0378">Hydrolase</keyword>
<keyword id="KW-0624">Polysaccharide degradation</keyword>
<keyword id="KW-0964">Secreted</keyword>
<keyword id="KW-0732">Signal</keyword>
<keyword id="KW-0843">Virulence</keyword>
<keyword id="KW-0858">Xylan degradation</keyword>
<accession>Q2LMP0</accession>
<proteinExistence type="evidence at transcript level"/>
<dbReference type="EC" id="3.2.1.8"/>
<dbReference type="EMBL" id="DQ057980">
    <property type="protein sequence ID" value="AAZ03776.1"/>
    <property type="molecule type" value="Genomic_DNA"/>
</dbReference>
<dbReference type="SMR" id="Q2LMP0"/>
<dbReference type="CAZy" id="GH11">
    <property type="family name" value="Glycoside Hydrolase Family 11"/>
</dbReference>
<dbReference type="BRENDA" id="3.2.1.8">
    <property type="organism ID" value="918"/>
</dbReference>
<dbReference type="UniPathway" id="UPA00114"/>
<dbReference type="PHI-base" id="PHI:546"/>
<dbReference type="GO" id="GO:0005576">
    <property type="term" value="C:extracellular region"/>
    <property type="evidence" value="ECO:0007669"/>
    <property type="project" value="UniProtKB-SubCell"/>
</dbReference>
<dbReference type="GO" id="GO:0031176">
    <property type="term" value="F:endo-1,4-beta-xylanase activity"/>
    <property type="evidence" value="ECO:0007669"/>
    <property type="project" value="UniProtKB-EC"/>
</dbReference>
<dbReference type="GO" id="GO:0045493">
    <property type="term" value="P:xylan catabolic process"/>
    <property type="evidence" value="ECO:0007669"/>
    <property type="project" value="UniProtKB-UniPathway"/>
</dbReference>
<dbReference type="FunFam" id="2.60.120.180:FF:000001">
    <property type="entry name" value="Endo-1,4-beta-xylanase"/>
    <property type="match status" value="1"/>
</dbReference>
<dbReference type="Gene3D" id="2.60.120.180">
    <property type="match status" value="1"/>
</dbReference>
<dbReference type="InterPro" id="IPR013320">
    <property type="entry name" value="ConA-like_dom_sf"/>
</dbReference>
<dbReference type="InterPro" id="IPR013319">
    <property type="entry name" value="GH11/12"/>
</dbReference>
<dbReference type="InterPro" id="IPR018208">
    <property type="entry name" value="GH11_AS_1"/>
</dbReference>
<dbReference type="InterPro" id="IPR033119">
    <property type="entry name" value="GH11_AS_2"/>
</dbReference>
<dbReference type="InterPro" id="IPR033123">
    <property type="entry name" value="GH11_dom"/>
</dbReference>
<dbReference type="InterPro" id="IPR001137">
    <property type="entry name" value="Glyco_hydro_11"/>
</dbReference>
<dbReference type="PANTHER" id="PTHR46828">
    <property type="entry name" value="ENDO-1,4-BETA-XYLANASE A-RELATED"/>
    <property type="match status" value="1"/>
</dbReference>
<dbReference type="PANTHER" id="PTHR46828:SF2">
    <property type="entry name" value="ENDO-1,4-BETA-XYLANASE A-RELATED"/>
    <property type="match status" value="1"/>
</dbReference>
<dbReference type="Pfam" id="PF00457">
    <property type="entry name" value="Glyco_hydro_11"/>
    <property type="match status" value="1"/>
</dbReference>
<dbReference type="PRINTS" id="PR00911">
    <property type="entry name" value="GLHYDRLASE11"/>
</dbReference>
<dbReference type="SUPFAM" id="SSF49899">
    <property type="entry name" value="Concanavalin A-like lectins/glucanases"/>
    <property type="match status" value="1"/>
</dbReference>
<dbReference type="PROSITE" id="PS00776">
    <property type="entry name" value="GH11_1"/>
    <property type="match status" value="1"/>
</dbReference>
<dbReference type="PROSITE" id="PS00777">
    <property type="entry name" value="GH11_2"/>
    <property type="match status" value="1"/>
</dbReference>
<dbReference type="PROSITE" id="PS51761">
    <property type="entry name" value="GH11_3"/>
    <property type="match status" value="1"/>
</dbReference>
<name>XY11A_BOTFU</name>